<sequence>MDLIKEFERLIPEIKKNLEQASSLEHIEQIRVAFLGRKGQLAALMSKIPSVDTSLRPVVGETANSVKNQLTQLIHEYKTQLDFLTTTNRIQNFDAGLPGKRPWYGTLHPITIVLEEICSVFTSLGYTIATGPEVETEYHNFEALGIPSEHPARDMQDTFYISDSILLRTHTSSIQIRTMLKKQPPIAIIAPGRVYRRDSDVTHTPMFHQIEGLVVDKNISMSHLRGTLTAFLKTIFGAEIKIRFRPSFFPFTEPSAEMDISCHPCNNTGYVKNEICRICKGSGWIEILGCGMVHPKVFESVGYDHNIYSGFAFGLGVERIAMLKYHIEDLRIFFENDLRFLRQFM</sequence>
<proteinExistence type="inferred from homology"/>
<feature type="chain" id="PRO_1000006853" description="Phenylalanine--tRNA ligase alpha subunit">
    <location>
        <begin position="1"/>
        <end position="345"/>
    </location>
</feature>
<feature type="binding site" evidence="1">
    <location>
        <position position="253"/>
    </location>
    <ligand>
        <name>Mg(2+)</name>
        <dbReference type="ChEBI" id="CHEBI:18420"/>
        <note>shared with beta subunit</note>
    </ligand>
</feature>
<name>SYFA_LAWIP</name>
<dbReference type="EC" id="6.1.1.20" evidence="1"/>
<dbReference type="EMBL" id="AM180252">
    <property type="protein sequence ID" value="CAJ54271.1"/>
    <property type="molecule type" value="Genomic_DNA"/>
</dbReference>
<dbReference type="RefSeq" id="WP_011526297.1">
    <property type="nucleotide sequence ID" value="NC_008011.1"/>
</dbReference>
<dbReference type="SMR" id="Q1MRV5"/>
<dbReference type="STRING" id="363253.LI0215"/>
<dbReference type="KEGG" id="lip:LI0215"/>
<dbReference type="eggNOG" id="COG0016">
    <property type="taxonomic scope" value="Bacteria"/>
</dbReference>
<dbReference type="HOGENOM" id="CLU_025086_0_1_7"/>
<dbReference type="OrthoDB" id="9800719at2"/>
<dbReference type="Proteomes" id="UP000002430">
    <property type="component" value="Chromosome"/>
</dbReference>
<dbReference type="GO" id="GO:0005737">
    <property type="term" value="C:cytoplasm"/>
    <property type="evidence" value="ECO:0007669"/>
    <property type="project" value="UniProtKB-SubCell"/>
</dbReference>
<dbReference type="GO" id="GO:0005524">
    <property type="term" value="F:ATP binding"/>
    <property type="evidence" value="ECO:0007669"/>
    <property type="project" value="UniProtKB-UniRule"/>
</dbReference>
<dbReference type="GO" id="GO:0000287">
    <property type="term" value="F:magnesium ion binding"/>
    <property type="evidence" value="ECO:0007669"/>
    <property type="project" value="UniProtKB-UniRule"/>
</dbReference>
<dbReference type="GO" id="GO:0004826">
    <property type="term" value="F:phenylalanine-tRNA ligase activity"/>
    <property type="evidence" value="ECO:0007669"/>
    <property type="project" value="UniProtKB-UniRule"/>
</dbReference>
<dbReference type="GO" id="GO:0000049">
    <property type="term" value="F:tRNA binding"/>
    <property type="evidence" value="ECO:0007669"/>
    <property type="project" value="InterPro"/>
</dbReference>
<dbReference type="GO" id="GO:0006432">
    <property type="term" value="P:phenylalanyl-tRNA aminoacylation"/>
    <property type="evidence" value="ECO:0007669"/>
    <property type="project" value="UniProtKB-UniRule"/>
</dbReference>
<dbReference type="CDD" id="cd00496">
    <property type="entry name" value="PheRS_alpha_core"/>
    <property type="match status" value="1"/>
</dbReference>
<dbReference type="FunFam" id="3.30.930.10:FF:000003">
    <property type="entry name" value="Phenylalanine--tRNA ligase alpha subunit"/>
    <property type="match status" value="1"/>
</dbReference>
<dbReference type="Gene3D" id="3.30.930.10">
    <property type="entry name" value="Bira Bifunctional Protein, Domain 2"/>
    <property type="match status" value="1"/>
</dbReference>
<dbReference type="HAMAP" id="MF_00281">
    <property type="entry name" value="Phe_tRNA_synth_alpha1"/>
    <property type="match status" value="1"/>
</dbReference>
<dbReference type="InterPro" id="IPR006195">
    <property type="entry name" value="aa-tRNA-synth_II"/>
</dbReference>
<dbReference type="InterPro" id="IPR045864">
    <property type="entry name" value="aa-tRNA-synth_II/BPL/LPL"/>
</dbReference>
<dbReference type="InterPro" id="IPR004529">
    <property type="entry name" value="Phe-tRNA-synth_IIc_asu"/>
</dbReference>
<dbReference type="InterPro" id="IPR004188">
    <property type="entry name" value="Phe-tRNA_ligase_II_N"/>
</dbReference>
<dbReference type="InterPro" id="IPR022911">
    <property type="entry name" value="Phe_tRNA_ligase_alpha1_bac"/>
</dbReference>
<dbReference type="InterPro" id="IPR002319">
    <property type="entry name" value="Phenylalanyl-tRNA_Synthase"/>
</dbReference>
<dbReference type="InterPro" id="IPR010978">
    <property type="entry name" value="tRNA-bd_arm"/>
</dbReference>
<dbReference type="NCBIfam" id="TIGR00468">
    <property type="entry name" value="pheS"/>
    <property type="match status" value="1"/>
</dbReference>
<dbReference type="PANTHER" id="PTHR11538:SF41">
    <property type="entry name" value="PHENYLALANINE--TRNA LIGASE, MITOCHONDRIAL"/>
    <property type="match status" value="1"/>
</dbReference>
<dbReference type="PANTHER" id="PTHR11538">
    <property type="entry name" value="PHENYLALANYL-TRNA SYNTHETASE"/>
    <property type="match status" value="1"/>
</dbReference>
<dbReference type="Pfam" id="PF02912">
    <property type="entry name" value="Phe_tRNA-synt_N"/>
    <property type="match status" value="1"/>
</dbReference>
<dbReference type="Pfam" id="PF01409">
    <property type="entry name" value="tRNA-synt_2d"/>
    <property type="match status" value="1"/>
</dbReference>
<dbReference type="SUPFAM" id="SSF55681">
    <property type="entry name" value="Class II aaRS and biotin synthetases"/>
    <property type="match status" value="1"/>
</dbReference>
<dbReference type="SUPFAM" id="SSF46589">
    <property type="entry name" value="tRNA-binding arm"/>
    <property type="match status" value="1"/>
</dbReference>
<dbReference type="PROSITE" id="PS50862">
    <property type="entry name" value="AA_TRNA_LIGASE_II"/>
    <property type="match status" value="1"/>
</dbReference>
<evidence type="ECO:0000255" key="1">
    <source>
        <dbReference type="HAMAP-Rule" id="MF_00281"/>
    </source>
</evidence>
<reference key="1">
    <citation type="submission" date="2005-11" db="EMBL/GenBank/DDBJ databases">
        <title>The complete genome sequence of Lawsonia intracellularis: the causative agent of proliferative enteropathy.</title>
        <authorList>
            <person name="Kaur K."/>
            <person name="Zhang Q."/>
            <person name="Beckler D."/>
            <person name="Munir S."/>
            <person name="Li L."/>
            <person name="Kinsley K."/>
            <person name="Herron L."/>
            <person name="Peterson A."/>
            <person name="May B."/>
            <person name="Singh S."/>
            <person name="Gebhart C."/>
            <person name="Kapur V."/>
        </authorList>
    </citation>
    <scope>NUCLEOTIDE SEQUENCE [LARGE SCALE GENOMIC DNA]</scope>
    <source>
        <strain>PHE/MN1-00</strain>
    </source>
</reference>
<comment type="catalytic activity">
    <reaction evidence="1">
        <text>tRNA(Phe) + L-phenylalanine + ATP = L-phenylalanyl-tRNA(Phe) + AMP + diphosphate + H(+)</text>
        <dbReference type="Rhea" id="RHEA:19413"/>
        <dbReference type="Rhea" id="RHEA-COMP:9668"/>
        <dbReference type="Rhea" id="RHEA-COMP:9699"/>
        <dbReference type="ChEBI" id="CHEBI:15378"/>
        <dbReference type="ChEBI" id="CHEBI:30616"/>
        <dbReference type="ChEBI" id="CHEBI:33019"/>
        <dbReference type="ChEBI" id="CHEBI:58095"/>
        <dbReference type="ChEBI" id="CHEBI:78442"/>
        <dbReference type="ChEBI" id="CHEBI:78531"/>
        <dbReference type="ChEBI" id="CHEBI:456215"/>
        <dbReference type="EC" id="6.1.1.20"/>
    </reaction>
</comment>
<comment type="cofactor">
    <cofactor evidence="1">
        <name>Mg(2+)</name>
        <dbReference type="ChEBI" id="CHEBI:18420"/>
    </cofactor>
    <text evidence="1">Binds 2 magnesium ions per tetramer.</text>
</comment>
<comment type="subunit">
    <text evidence="1">Tetramer of two alpha and two beta subunits.</text>
</comment>
<comment type="subcellular location">
    <subcellularLocation>
        <location evidence="1">Cytoplasm</location>
    </subcellularLocation>
</comment>
<comment type="similarity">
    <text evidence="1">Belongs to the class-II aminoacyl-tRNA synthetase family. Phe-tRNA synthetase alpha subunit type 1 subfamily.</text>
</comment>
<keyword id="KW-0030">Aminoacyl-tRNA synthetase</keyword>
<keyword id="KW-0067">ATP-binding</keyword>
<keyword id="KW-0963">Cytoplasm</keyword>
<keyword id="KW-0436">Ligase</keyword>
<keyword id="KW-0460">Magnesium</keyword>
<keyword id="KW-0479">Metal-binding</keyword>
<keyword id="KW-0547">Nucleotide-binding</keyword>
<keyword id="KW-0648">Protein biosynthesis</keyword>
<keyword id="KW-1185">Reference proteome</keyword>
<organism>
    <name type="scientific">Lawsonia intracellularis (strain PHE/MN1-00)</name>
    <dbReference type="NCBI Taxonomy" id="363253"/>
    <lineage>
        <taxon>Bacteria</taxon>
        <taxon>Pseudomonadati</taxon>
        <taxon>Thermodesulfobacteriota</taxon>
        <taxon>Desulfovibrionia</taxon>
        <taxon>Desulfovibrionales</taxon>
        <taxon>Desulfovibrionaceae</taxon>
        <taxon>Lawsonia</taxon>
    </lineage>
</organism>
<protein>
    <recommendedName>
        <fullName evidence="1">Phenylalanine--tRNA ligase alpha subunit</fullName>
        <ecNumber evidence="1">6.1.1.20</ecNumber>
    </recommendedName>
    <alternativeName>
        <fullName evidence="1">Phenylalanyl-tRNA synthetase alpha subunit</fullName>
        <shortName evidence="1">PheRS</shortName>
    </alternativeName>
</protein>
<gene>
    <name evidence="1" type="primary">pheS</name>
    <name type="ordered locus">LI0215</name>
</gene>
<accession>Q1MRV5</accession>